<accession>Q45068</accession>
<accession>P40743</accession>
<evidence type="ECO:0000255" key="1"/>
<evidence type="ECO:0000305" key="2"/>
<proteinExistence type="evidence at transcript level"/>
<protein>
    <recommendedName>
        <fullName>Amino-acid carrier protein AlsT</fullName>
    </recommendedName>
</protein>
<name>ALST_BACSU</name>
<gene>
    <name type="primary">alsT</name>
    <name type="ordered locus">BSU18120</name>
</gene>
<feature type="chain" id="PRO_0000161568" description="Amino-acid carrier protein AlsT">
    <location>
        <begin position="1"/>
        <end position="465"/>
    </location>
</feature>
<feature type="transmembrane region" description="Helical" evidence="1">
    <location>
        <begin position="20"/>
        <end position="40"/>
    </location>
</feature>
<feature type="transmembrane region" description="Helical" evidence="1">
    <location>
        <begin position="82"/>
        <end position="102"/>
    </location>
</feature>
<feature type="transmembrane region" description="Helical" evidence="1">
    <location>
        <begin position="142"/>
        <end position="162"/>
    </location>
</feature>
<feature type="transmembrane region" description="Helical" evidence="1">
    <location>
        <begin position="177"/>
        <end position="197"/>
    </location>
</feature>
<feature type="transmembrane region" description="Helical" evidence="1">
    <location>
        <begin position="208"/>
        <end position="228"/>
    </location>
</feature>
<feature type="transmembrane region" description="Helical" evidence="1">
    <location>
        <begin position="241"/>
        <end position="261"/>
    </location>
</feature>
<feature type="transmembrane region" description="Helical" evidence="1">
    <location>
        <begin position="296"/>
        <end position="316"/>
    </location>
</feature>
<feature type="transmembrane region" description="Helical" evidence="1">
    <location>
        <begin position="336"/>
        <end position="356"/>
    </location>
</feature>
<feature type="transmembrane region" description="Helical" evidence="1">
    <location>
        <begin position="382"/>
        <end position="402"/>
    </location>
</feature>
<feature type="transmembrane region" description="Helical" evidence="1">
    <location>
        <begin position="405"/>
        <end position="425"/>
    </location>
</feature>
<feature type="sequence conflict" description="In Ref. 3; X67044." evidence="2" ref="3">
    <original>VFF</original>
    <variation>KLI</variation>
    <location>
        <begin position="298"/>
        <end position="300"/>
    </location>
</feature>
<feature type="sequence conflict" description="In Ref. 3; X67044." evidence="2" ref="3">
    <original>YY</original>
    <variation>ID</variation>
    <location>
        <begin position="360"/>
        <end position="361"/>
    </location>
</feature>
<feature type="sequence conflict" description="In Ref. 3; X67044." evidence="2" ref="3">
    <original>A</original>
    <variation>T</variation>
    <location>
        <position position="419"/>
    </location>
</feature>
<feature type="sequence conflict" description="In Ref. 3; X67044." evidence="2" ref="3">
    <original>A</original>
    <variation>V</variation>
    <location>
        <position position="465"/>
    </location>
</feature>
<comment type="subcellular location">
    <subcellularLocation>
        <location>Cell membrane</location>
        <topology>Multi-pass membrane protein</topology>
    </subcellularLocation>
</comment>
<comment type="induction">
    <text>Negatively regulated by TnrA under nitrogen-limited conditions.</text>
</comment>
<comment type="similarity">
    <text evidence="2">Belongs to the alanine or glycine:cation symporter (AGCS) (TC 2.A.25) family.</text>
</comment>
<keyword id="KW-0029">Amino-acid transport</keyword>
<keyword id="KW-1003">Cell membrane</keyword>
<keyword id="KW-0406">Ion transport</keyword>
<keyword id="KW-0472">Membrane</keyword>
<keyword id="KW-1185">Reference proteome</keyword>
<keyword id="KW-0915">Sodium</keyword>
<keyword id="KW-0739">Sodium transport</keyword>
<keyword id="KW-0769">Symport</keyword>
<keyword id="KW-0812">Transmembrane</keyword>
<keyword id="KW-1133">Transmembrane helix</keyword>
<keyword id="KW-0813">Transport</keyword>
<organism>
    <name type="scientific">Bacillus subtilis (strain 168)</name>
    <dbReference type="NCBI Taxonomy" id="224308"/>
    <lineage>
        <taxon>Bacteria</taxon>
        <taxon>Bacillati</taxon>
        <taxon>Bacillota</taxon>
        <taxon>Bacilli</taxon>
        <taxon>Bacillales</taxon>
        <taxon>Bacillaceae</taxon>
        <taxon>Bacillus</taxon>
    </lineage>
</organism>
<sequence>MESFFNSLINIPSDFIWKYLFYILIGLGLFFTIRFGFIQFRYFIEMFRIVGEKPEGNKGVSSMQAFFISAASRVGTGNLTGVALAIATGGPGAVFWMWVVAAVGMASSFVESTLAQLYKVRDGEDFRGGPAYYIQKGLGARWLGIVFAILITVSFGLIFNAVQTNTIAGALDGAFHVNKIVVAIVLAVLTAFIIFGGLKRVVAVSQLIVPVMAGIYILIALFVVITNITAFPGVIATIVKNALGFEQVVGGGIGGIIVIGAQRGLFSNEAGMGSAPNAAATAHVSHPAKQGFIQTLGVFFDTFIICTSTAFIILLYSVTPKGDGIQVTQAALNHHIGGWAPTFIAVAMFLFAFSSVVGNYYYGETNIEFIKTSKTWLNIYRIAVIAMVVYGSLSGFQIVWDMADLFMGIMALINLIVIALLSNVAYKVYKDYAKQRKQGLDPVFKAKNIPGLKNAETWEDEKQEA</sequence>
<reference key="1">
    <citation type="journal article" date="1996" name="Microbiology">
        <title>New genes in the 170 degrees region of the Bacillus subtilis genome encode DNA gyrase subunits, a thioredoxin, a xylanase and an amino acid transporter.</title>
        <authorList>
            <person name="Rose M."/>
            <person name="Entian K.-D."/>
        </authorList>
    </citation>
    <scope>NUCLEOTIDE SEQUENCE [GENOMIC DNA]</scope>
    <source>
        <strain>168</strain>
    </source>
</reference>
<reference key="2">
    <citation type="journal article" date="1997" name="Nature">
        <title>The complete genome sequence of the Gram-positive bacterium Bacillus subtilis.</title>
        <authorList>
            <person name="Kunst F."/>
            <person name="Ogasawara N."/>
            <person name="Moszer I."/>
            <person name="Albertini A.M."/>
            <person name="Alloni G."/>
            <person name="Azevedo V."/>
            <person name="Bertero M.G."/>
            <person name="Bessieres P."/>
            <person name="Bolotin A."/>
            <person name="Borchert S."/>
            <person name="Borriss R."/>
            <person name="Boursier L."/>
            <person name="Brans A."/>
            <person name="Braun M."/>
            <person name="Brignell S.C."/>
            <person name="Bron S."/>
            <person name="Brouillet S."/>
            <person name="Bruschi C.V."/>
            <person name="Caldwell B."/>
            <person name="Capuano V."/>
            <person name="Carter N.M."/>
            <person name="Choi S.-K."/>
            <person name="Codani J.-J."/>
            <person name="Connerton I.F."/>
            <person name="Cummings N.J."/>
            <person name="Daniel R.A."/>
            <person name="Denizot F."/>
            <person name="Devine K.M."/>
            <person name="Duesterhoeft A."/>
            <person name="Ehrlich S.D."/>
            <person name="Emmerson P.T."/>
            <person name="Entian K.-D."/>
            <person name="Errington J."/>
            <person name="Fabret C."/>
            <person name="Ferrari E."/>
            <person name="Foulger D."/>
            <person name="Fritz C."/>
            <person name="Fujita M."/>
            <person name="Fujita Y."/>
            <person name="Fuma S."/>
            <person name="Galizzi A."/>
            <person name="Galleron N."/>
            <person name="Ghim S.-Y."/>
            <person name="Glaser P."/>
            <person name="Goffeau A."/>
            <person name="Golightly E.J."/>
            <person name="Grandi G."/>
            <person name="Guiseppi G."/>
            <person name="Guy B.J."/>
            <person name="Haga K."/>
            <person name="Haiech J."/>
            <person name="Harwood C.R."/>
            <person name="Henaut A."/>
            <person name="Hilbert H."/>
            <person name="Holsappel S."/>
            <person name="Hosono S."/>
            <person name="Hullo M.-F."/>
            <person name="Itaya M."/>
            <person name="Jones L.-M."/>
            <person name="Joris B."/>
            <person name="Karamata D."/>
            <person name="Kasahara Y."/>
            <person name="Klaerr-Blanchard M."/>
            <person name="Klein C."/>
            <person name="Kobayashi Y."/>
            <person name="Koetter P."/>
            <person name="Koningstein G."/>
            <person name="Krogh S."/>
            <person name="Kumano M."/>
            <person name="Kurita K."/>
            <person name="Lapidus A."/>
            <person name="Lardinois S."/>
            <person name="Lauber J."/>
            <person name="Lazarevic V."/>
            <person name="Lee S.-M."/>
            <person name="Levine A."/>
            <person name="Liu H."/>
            <person name="Masuda S."/>
            <person name="Mauel C."/>
            <person name="Medigue C."/>
            <person name="Medina N."/>
            <person name="Mellado R.P."/>
            <person name="Mizuno M."/>
            <person name="Moestl D."/>
            <person name="Nakai S."/>
            <person name="Noback M."/>
            <person name="Noone D."/>
            <person name="O'Reilly M."/>
            <person name="Ogawa K."/>
            <person name="Ogiwara A."/>
            <person name="Oudega B."/>
            <person name="Park S.-H."/>
            <person name="Parro V."/>
            <person name="Pohl T.M."/>
            <person name="Portetelle D."/>
            <person name="Porwollik S."/>
            <person name="Prescott A.M."/>
            <person name="Presecan E."/>
            <person name="Pujic P."/>
            <person name="Purnelle B."/>
            <person name="Rapoport G."/>
            <person name="Rey M."/>
            <person name="Reynolds S."/>
            <person name="Rieger M."/>
            <person name="Rivolta C."/>
            <person name="Rocha E."/>
            <person name="Roche B."/>
            <person name="Rose M."/>
            <person name="Sadaie Y."/>
            <person name="Sato T."/>
            <person name="Scanlan E."/>
            <person name="Schleich S."/>
            <person name="Schroeter R."/>
            <person name="Scoffone F."/>
            <person name="Sekiguchi J."/>
            <person name="Sekowska A."/>
            <person name="Seror S.J."/>
            <person name="Serror P."/>
            <person name="Shin B.-S."/>
            <person name="Soldo B."/>
            <person name="Sorokin A."/>
            <person name="Tacconi E."/>
            <person name="Takagi T."/>
            <person name="Takahashi H."/>
            <person name="Takemaru K."/>
            <person name="Takeuchi M."/>
            <person name="Tamakoshi A."/>
            <person name="Tanaka T."/>
            <person name="Terpstra P."/>
            <person name="Tognoni A."/>
            <person name="Tosato V."/>
            <person name="Uchiyama S."/>
            <person name="Vandenbol M."/>
            <person name="Vannier F."/>
            <person name="Vassarotti A."/>
            <person name="Viari A."/>
            <person name="Wambutt R."/>
            <person name="Wedler E."/>
            <person name="Wedler H."/>
            <person name="Weitzenegger T."/>
            <person name="Winters P."/>
            <person name="Wipat A."/>
            <person name="Yamamoto H."/>
            <person name="Yamane K."/>
            <person name="Yasumoto K."/>
            <person name="Yata K."/>
            <person name="Yoshida K."/>
            <person name="Yoshikawa H.-F."/>
            <person name="Zumstein E."/>
            <person name="Yoshikawa H."/>
            <person name="Danchin A."/>
        </authorList>
    </citation>
    <scope>NUCLEOTIDE SEQUENCE [LARGE SCALE GENOMIC DNA]</scope>
    <source>
        <strain>168</strain>
    </source>
</reference>
<reference key="3">
    <citation type="journal article" date="1994" name="Antonie Van Leeuwenhoek">
        <title>Nucleotide sequence of an endo-beta-1,4-glucanase gene from Bacillus subtilis CK-2.</title>
        <authorList>
            <person name="Lindahl V."/>
            <person name="Aa K."/>
            <person name="Tronsmo A."/>
        </authorList>
    </citation>
    <scope>NUCLEOTIDE SEQUENCE [GENOMIC DNA] OF 298-465</scope>
    <source>
        <strain>CK-2</strain>
    </source>
</reference>
<reference key="4">
    <citation type="journal article" date="2003" name="Mol. Microbiol.">
        <title>Identification of additional TnrA-regulated genes of Bacillus subtilis associated with a TnrA box.</title>
        <authorList>
            <person name="Yoshida K."/>
            <person name="Yamaguchi H."/>
            <person name="Kinehara M."/>
            <person name="Ohki Y.-H."/>
            <person name="Nakaura Y."/>
            <person name="Fujita Y."/>
        </authorList>
    </citation>
    <scope>REGULATION BY TNRA</scope>
</reference>
<dbReference type="EMBL" id="Z73234">
    <property type="protein sequence ID" value="CAA97609.1"/>
    <property type="molecule type" value="Genomic_DNA"/>
</dbReference>
<dbReference type="EMBL" id="AL009126">
    <property type="protein sequence ID" value="CAB13695.1"/>
    <property type="molecule type" value="Genomic_DNA"/>
</dbReference>
<dbReference type="EMBL" id="X67044">
    <property type="status" value="NOT_ANNOTATED_CDS"/>
    <property type="molecule type" value="Genomic_DNA"/>
</dbReference>
<dbReference type="PIR" id="A69585">
    <property type="entry name" value="A69585"/>
</dbReference>
<dbReference type="RefSeq" id="NP_389694.1">
    <property type="nucleotide sequence ID" value="NC_000964.3"/>
</dbReference>
<dbReference type="RefSeq" id="WP_003231542.1">
    <property type="nucleotide sequence ID" value="NZ_OZ025638.1"/>
</dbReference>
<dbReference type="SMR" id="Q45068"/>
<dbReference type="FunCoup" id="Q45068">
    <property type="interactions" value="120"/>
</dbReference>
<dbReference type="STRING" id="224308.BSU18120"/>
<dbReference type="TCDB" id="2.A.25.1.5">
    <property type="family name" value="the alanine or glycine:cation symporter (agcs) family"/>
</dbReference>
<dbReference type="PaxDb" id="224308-BSU18120"/>
<dbReference type="EnsemblBacteria" id="CAB13695">
    <property type="protein sequence ID" value="CAB13695"/>
    <property type="gene ID" value="BSU_18120"/>
</dbReference>
<dbReference type="GeneID" id="938191"/>
<dbReference type="KEGG" id="bsu:BSU18120"/>
<dbReference type="PATRIC" id="fig|224308.179.peg.1976"/>
<dbReference type="eggNOG" id="COG1115">
    <property type="taxonomic scope" value="Bacteria"/>
</dbReference>
<dbReference type="InParanoid" id="Q45068"/>
<dbReference type="OrthoDB" id="9804874at2"/>
<dbReference type="PhylomeDB" id="Q45068"/>
<dbReference type="BioCyc" id="BSUB:BSU18120-MONOMER"/>
<dbReference type="Proteomes" id="UP000001570">
    <property type="component" value="Chromosome"/>
</dbReference>
<dbReference type="GO" id="GO:0005886">
    <property type="term" value="C:plasma membrane"/>
    <property type="evidence" value="ECO:0000318"/>
    <property type="project" value="GO_Central"/>
</dbReference>
<dbReference type="GO" id="GO:0005283">
    <property type="term" value="F:amino acid:sodium symporter activity"/>
    <property type="evidence" value="ECO:0007669"/>
    <property type="project" value="InterPro"/>
</dbReference>
<dbReference type="FunFam" id="1.20.1740.10:FF:000004">
    <property type="entry name" value="Sodium:alanine symporter family protein"/>
    <property type="match status" value="1"/>
</dbReference>
<dbReference type="Gene3D" id="1.20.1740.10">
    <property type="entry name" value="Amino acid/polyamine transporter I"/>
    <property type="match status" value="1"/>
</dbReference>
<dbReference type="InterPro" id="IPR001463">
    <property type="entry name" value="Na/Ala_symport"/>
</dbReference>
<dbReference type="NCBIfam" id="TIGR00835">
    <property type="entry name" value="agcS"/>
    <property type="match status" value="1"/>
</dbReference>
<dbReference type="PANTHER" id="PTHR30330">
    <property type="entry name" value="AGSS FAMILY TRANSPORTER, SODIUM-ALANINE"/>
    <property type="match status" value="1"/>
</dbReference>
<dbReference type="PANTHER" id="PTHR30330:SF1">
    <property type="entry name" value="AMINO-ACID CARRIER PROTEIN ALST"/>
    <property type="match status" value="1"/>
</dbReference>
<dbReference type="Pfam" id="PF01235">
    <property type="entry name" value="Na_Ala_symp"/>
    <property type="match status" value="1"/>
</dbReference>
<dbReference type="PRINTS" id="PR00175">
    <property type="entry name" value="NAALASMPORT"/>
</dbReference>
<dbReference type="PROSITE" id="PS00873">
    <property type="entry name" value="NA_ALANINE_SYMP"/>
    <property type="match status" value="1"/>
</dbReference>